<accession>Q11PM7</accession>
<gene>
    <name evidence="1" type="primary">metK</name>
    <name type="ordered locus">CHU_3400</name>
</gene>
<keyword id="KW-0067">ATP-binding</keyword>
<keyword id="KW-0963">Cytoplasm</keyword>
<keyword id="KW-0460">Magnesium</keyword>
<keyword id="KW-0479">Metal-binding</keyword>
<keyword id="KW-0547">Nucleotide-binding</keyword>
<keyword id="KW-0554">One-carbon metabolism</keyword>
<keyword id="KW-0630">Potassium</keyword>
<keyword id="KW-1185">Reference proteome</keyword>
<keyword id="KW-0808">Transferase</keyword>
<protein>
    <recommendedName>
        <fullName evidence="1">S-adenosylmethionine synthase</fullName>
        <shortName evidence="1">AdoMet synthase</shortName>
        <ecNumber evidence="1">2.5.1.6</ecNumber>
    </recommendedName>
    <alternativeName>
        <fullName evidence="1">MAT</fullName>
    </alternativeName>
    <alternativeName>
        <fullName evidence="1">Methionine adenosyltransferase</fullName>
    </alternativeName>
</protein>
<proteinExistence type="inferred from homology"/>
<organism>
    <name type="scientific">Cytophaga hutchinsonii (strain ATCC 33406 / DSM 1761 / CIP 103989 / NBRC 15051 / NCIMB 9469 / D465)</name>
    <dbReference type="NCBI Taxonomy" id="269798"/>
    <lineage>
        <taxon>Bacteria</taxon>
        <taxon>Pseudomonadati</taxon>
        <taxon>Bacteroidota</taxon>
        <taxon>Cytophagia</taxon>
        <taxon>Cytophagales</taxon>
        <taxon>Cytophagaceae</taxon>
        <taxon>Cytophaga</taxon>
    </lineage>
</organism>
<evidence type="ECO:0000255" key="1">
    <source>
        <dbReference type="HAMAP-Rule" id="MF_00086"/>
    </source>
</evidence>
<dbReference type="EC" id="2.5.1.6" evidence="1"/>
<dbReference type="EMBL" id="CP000383">
    <property type="protein sequence ID" value="ABG60636.1"/>
    <property type="molecule type" value="Genomic_DNA"/>
</dbReference>
<dbReference type="RefSeq" id="WP_011586743.1">
    <property type="nucleotide sequence ID" value="NC_008255.1"/>
</dbReference>
<dbReference type="SMR" id="Q11PM7"/>
<dbReference type="STRING" id="269798.CHU_3400"/>
<dbReference type="KEGG" id="chu:CHU_3400"/>
<dbReference type="eggNOG" id="COG0192">
    <property type="taxonomic scope" value="Bacteria"/>
</dbReference>
<dbReference type="HOGENOM" id="CLU_041802_1_1_10"/>
<dbReference type="OrthoDB" id="9801686at2"/>
<dbReference type="UniPathway" id="UPA00315">
    <property type="reaction ID" value="UER00080"/>
</dbReference>
<dbReference type="Proteomes" id="UP000001822">
    <property type="component" value="Chromosome"/>
</dbReference>
<dbReference type="GO" id="GO:0005737">
    <property type="term" value="C:cytoplasm"/>
    <property type="evidence" value="ECO:0007669"/>
    <property type="project" value="UniProtKB-SubCell"/>
</dbReference>
<dbReference type="GO" id="GO:0005524">
    <property type="term" value="F:ATP binding"/>
    <property type="evidence" value="ECO:0007669"/>
    <property type="project" value="UniProtKB-UniRule"/>
</dbReference>
<dbReference type="GO" id="GO:0000287">
    <property type="term" value="F:magnesium ion binding"/>
    <property type="evidence" value="ECO:0007669"/>
    <property type="project" value="UniProtKB-UniRule"/>
</dbReference>
<dbReference type="GO" id="GO:0004478">
    <property type="term" value="F:methionine adenosyltransferase activity"/>
    <property type="evidence" value="ECO:0007669"/>
    <property type="project" value="UniProtKB-UniRule"/>
</dbReference>
<dbReference type="GO" id="GO:0006730">
    <property type="term" value="P:one-carbon metabolic process"/>
    <property type="evidence" value="ECO:0007669"/>
    <property type="project" value="UniProtKB-KW"/>
</dbReference>
<dbReference type="GO" id="GO:0006556">
    <property type="term" value="P:S-adenosylmethionine biosynthetic process"/>
    <property type="evidence" value="ECO:0007669"/>
    <property type="project" value="UniProtKB-UniRule"/>
</dbReference>
<dbReference type="CDD" id="cd18079">
    <property type="entry name" value="S-AdoMet_synt"/>
    <property type="match status" value="1"/>
</dbReference>
<dbReference type="FunFam" id="3.30.300.10:FF:000003">
    <property type="entry name" value="S-adenosylmethionine synthase"/>
    <property type="match status" value="1"/>
</dbReference>
<dbReference type="Gene3D" id="3.30.300.10">
    <property type="match status" value="3"/>
</dbReference>
<dbReference type="HAMAP" id="MF_00086">
    <property type="entry name" value="S_AdoMet_synth1"/>
    <property type="match status" value="1"/>
</dbReference>
<dbReference type="InterPro" id="IPR022631">
    <property type="entry name" value="ADOMET_SYNTHASE_CS"/>
</dbReference>
<dbReference type="InterPro" id="IPR022630">
    <property type="entry name" value="S-AdoMet_synt_C"/>
</dbReference>
<dbReference type="InterPro" id="IPR022629">
    <property type="entry name" value="S-AdoMet_synt_central"/>
</dbReference>
<dbReference type="InterPro" id="IPR022628">
    <property type="entry name" value="S-AdoMet_synt_N"/>
</dbReference>
<dbReference type="InterPro" id="IPR002133">
    <property type="entry name" value="S-AdoMet_synthetase"/>
</dbReference>
<dbReference type="InterPro" id="IPR022636">
    <property type="entry name" value="S-AdoMet_synthetase_sfam"/>
</dbReference>
<dbReference type="NCBIfam" id="TIGR01034">
    <property type="entry name" value="metK"/>
    <property type="match status" value="1"/>
</dbReference>
<dbReference type="PANTHER" id="PTHR11964">
    <property type="entry name" value="S-ADENOSYLMETHIONINE SYNTHETASE"/>
    <property type="match status" value="1"/>
</dbReference>
<dbReference type="Pfam" id="PF02773">
    <property type="entry name" value="S-AdoMet_synt_C"/>
    <property type="match status" value="1"/>
</dbReference>
<dbReference type="Pfam" id="PF02772">
    <property type="entry name" value="S-AdoMet_synt_M"/>
    <property type="match status" value="1"/>
</dbReference>
<dbReference type="Pfam" id="PF00438">
    <property type="entry name" value="S-AdoMet_synt_N"/>
    <property type="match status" value="1"/>
</dbReference>
<dbReference type="PIRSF" id="PIRSF000497">
    <property type="entry name" value="MAT"/>
    <property type="match status" value="1"/>
</dbReference>
<dbReference type="SUPFAM" id="SSF55973">
    <property type="entry name" value="S-adenosylmethionine synthetase"/>
    <property type="match status" value="3"/>
</dbReference>
<dbReference type="PROSITE" id="PS00376">
    <property type="entry name" value="ADOMET_SYNTHASE_1"/>
    <property type="match status" value="1"/>
</dbReference>
<dbReference type="PROSITE" id="PS00377">
    <property type="entry name" value="ADOMET_SYNTHASE_2"/>
    <property type="match status" value="1"/>
</dbReference>
<name>METK_CYTH3</name>
<feature type="chain" id="PRO_0000302909" description="S-adenosylmethionine synthase">
    <location>
        <begin position="1"/>
        <end position="419"/>
    </location>
</feature>
<feature type="region of interest" description="Flexible loop" evidence="1">
    <location>
        <begin position="98"/>
        <end position="108"/>
    </location>
</feature>
<feature type="binding site" description="in other chain" evidence="1">
    <location>
        <position position="14"/>
    </location>
    <ligand>
        <name>ATP</name>
        <dbReference type="ChEBI" id="CHEBI:30616"/>
        <note>ligand shared between two neighboring subunits</note>
    </ligand>
</feature>
<feature type="binding site" evidence="1">
    <location>
        <position position="16"/>
    </location>
    <ligand>
        <name>Mg(2+)</name>
        <dbReference type="ChEBI" id="CHEBI:18420"/>
    </ligand>
</feature>
<feature type="binding site" evidence="1">
    <location>
        <position position="42"/>
    </location>
    <ligand>
        <name>K(+)</name>
        <dbReference type="ChEBI" id="CHEBI:29103"/>
    </ligand>
</feature>
<feature type="binding site" description="in other chain" evidence="1">
    <location>
        <position position="55"/>
    </location>
    <ligand>
        <name>L-methionine</name>
        <dbReference type="ChEBI" id="CHEBI:57844"/>
        <note>ligand shared between two neighboring subunits</note>
    </ligand>
</feature>
<feature type="binding site" description="in other chain" evidence="1">
    <location>
        <position position="98"/>
    </location>
    <ligand>
        <name>L-methionine</name>
        <dbReference type="ChEBI" id="CHEBI:57844"/>
        <note>ligand shared between two neighboring subunits</note>
    </ligand>
</feature>
<feature type="binding site" description="in other chain" evidence="1">
    <location>
        <begin position="164"/>
        <end position="166"/>
    </location>
    <ligand>
        <name>ATP</name>
        <dbReference type="ChEBI" id="CHEBI:30616"/>
        <note>ligand shared between two neighboring subunits</note>
    </ligand>
</feature>
<feature type="binding site" description="in other chain" evidence="1">
    <location>
        <begin position="242"/>
        <end position="243"/>
    </location>
    <ligand>
        <name>ATP</name>
        <dbReference type="ChEBI" id="CHEBI:30616"/>
        <note>ligand shared between two neighboring subunits</note>
    </ligand>
</feature>
<feature type="binding site" evidence="1">
    <location>
        <position position="251"/>
    </location>
    <ligand>
        <name>ATP</name>
        <dbReference type="ChEBI" id="CHEBI:30616"/>
        <note>ligand shared between two neighboring subunits</note>
    </ligand>
</feature>
<feature type="binding site" evidence="1">
    <location>
        <position position="251"/>
    </location>
    <ligand>
        <name>L-methionine</name>
        <dbReference type="ChEBI" id="CHEBI:57844"/>
        <note>ligand shared between two neighboring subunits</note>
    </ligand>
</feature>
<feature type="binding site" description="in other chain" evidence="1">
    <location>
        <begin position="257"/>
        <end position="258"/>
    </location>
    <ligand>
        <name>ATP</name>
        <dbReference type="ChEBI" id="CHEBI:30616"/>
        <note>ligand shared between two neighboring subunits</note>
    </ligand>
</feature>
<feature type="binding site" evidence="1">
    <location>
        <position position="274"/>
    </location>
    <ligand>
        <name>ATP</name>
        <dbReference type="ChEBI" id="CHEBI:30616"/>
        <note>ligand shared between two neighboring subunits</note>
    </ligand>
</feature>
<feature type="binding site" evidence="1">
    <location>
        <position position="278"/>
    </location>
    <ligand>
        <name>ATP</name>
        <dbReference type="ChEBI" id="CHEBI:30616"/>
        <note>ligand shared between two neighboring subunits</note>
    </ligand>
</feature>
<feature type="binding site" description="in other chain" evidence="1">
    <location>
        <position position="282"/>
    </location>
    <ligand>
        <name>L-methionine</name>
        <dbReference type="ChEBI" id="CHEBI:57844"/>
        <note>ligand shared between two neighboring subunits</note>
    </ligand>
</feature>
<comment type="function">
    <text evidence="1">Catalyzes the formation of S-adenosylmethionine (AdoMet) from methionine and ATP. The overall synthetic reaction is composed of two sequential steps, AdoMet formation and the subsequent tripolyphosphate hydrolysis which occurs prior to release of AdoMet from the enzyme.</text>
</comment>
<comment type="catalytic activity">
    <reaction evidence="1">
        <text>L-methionine + ATP + H2O = S-adenosyl-L-methionine + phosphate + diphosphate</text>
        <dbReference type="Rhea" id="RHEA:21080"/>
        <dbReference type="ChEBI" id="CHEBI:15377"/>
        <dbReference type="ChEBI" id="CHEBI:30616"/>
        <dbReference type="ChEBI" id="CHEBI:33019"/>
        <dbReference type="ChEBI" id="CHEBI:43474"/>
        <dbReference type="ChEBI" id="CHEBI:57844"/>
        <dbReference type="ChEBI" id="CHEBI:59789"/>
        <dbReference type="EC" id="2.5.1.6"/>
    </reaction>
</comment>
<comment type="cofactor">
    <cofactor evidence="1">
        <name>Mg(2+)</name>
        <dbReference type="ChEBI" id="CHEBI:18420"/>
    </cofactor>
    <text evidence="1">Binds 2 divalent ions per subunit.</text>
</comment>
<comment type="cofactor">
    <cofactor evidence="1">
        <name>K(+)</name>
        <dbReference type="ChEBI" id="CHEBI:29103"/>
    </cofactor>
    <text evidence="1">Binds 1 potassium ion per subunit.</text>
</comment>
<comment type="pathway">
    <text evidence="1">Amino-acid biosynthesis; S-adenosyl-L-methionine biosynthesis; S-adenosyl-L-methionine from L-methionine: step 1/1.</text>
</comment>
<comment type="subunit">
    <text evidence="1">Homotetramer; dimer of dimers.</text>
</comment>
<comment type="subcellular location">
    <subcellularLocation>
        <location evidence="1">Cytoplasm</location>
    </subcellularLocation>
</comment>
<comment type="similarity">
    <text evidence="1">Belongs to the AdoMet synthase family.</text>
</comment>
<reference key="1">
    <citation type="journal article" date="2007" name="Appl. Environ. Microbiol.">
        <title>Genome sequence of the cellulolytic gliding bacterium Cytophaga hutchinsonii.</title>
        <authorList>
            <person name="Xie G."/>
            <person name="Bruce D.C."/>
            <person name="Challacombe J.F."/>
            <person name="Chertkov O."/>
            <person name="Detter J.C."/>
            <person name="Gilna P."/>
            <person name="Han C.S."/>
            <person name="Lucas S."/>
            <person name="Misra M."/>
            <person name="Myers G.L."/>
            <person name="Richardson P."/>
            <person name="Tapia R."/>
            <person name="Thayer N."/>
            <person name="Thompson L.S."/>
            <person name="Brettin T.S."/>
            <person name="Henrissat B."/>
            <person name="Wilson D.B."/>
            <person name="McBride M.J."/>
        </authorList>
    </citation>
    <scope>NUCLEOTIDE SEQUENCE [LARGE SCALE GENOMIC DNA]</scope>
    <source>
        <strain>ATCC 33406 / DSM 1761 / JCM 20678 / CIP 103989 / IAM 12607 / NBRC 15051 / NCIMB 9469 / D465</strain>
    </source>
</reference>
<sequence>MPYLFTSESVSEGHPDKVADQISDALIDHFLAFDPNAKVACETLVTTGQVVLAGEVKSKAYLDVQEIAREVIRKIGYTKSEYMFEANSCGIFSAIHEQSADINQGVDRKKKEEQGAGDQGMMFGYATNETNDYMPLALDLAHKLLIELAALRREGKQIKYLRPDAKSQVTLEYDDNNRPVRIDAIVLSTQHDDFDTEEKMHKKIEKDIVSILIPRIVSKYPKYKKFFDGKTKIKYHINPTGKFVIGGPHGDTGLTGRKIIVDTYGGKGAHGGGAFSGKDPSKVDRSAAYATRHIAKNLVAAGLCDEVLVQVSYAIGVAKPMGIYVNTYGTAKVKKNDGEIAKIVEKLFDMRPYAIEQRLQLRNPIYSETAAYGHMGRKPETVTKSFKSNDGKIIKKKVELFTWEKLDYVDKVRKAFGIK</sequence>